<sequence length="30" mass="3209">GLKDMIKNLAKEAAVKLAGAVINRFSPQPQ</sequence>
<organism evidence="2">
    <name type="scientific">Physalaemus nattereri</name>
    <name type="common">Cuyaba dwarf frog</name>
    <name type="synonym">Eupemphix nattereri</name>
    <dbReference type="NCBI Taxonomy" id="248869"/>
    <lineage>
        <taxon>Eukaryota</taxon>
        <taxon>Metazoa</taxon>
        <taxon>Chordata</taxon>
        <taxon>Craniata</taxon>
        <taxon>Vertebrata</taxon>
        <taxon>Euteleostomi</taxon>
        <taxon>Amphibia</taxon>
        <taxon>Batrachia</taxon>
        <taxon>Anura</taxon>
        <taxon>Neobatrachia</taxon>
        <taxon>Hyloidea</taxon>
        <taxon>Leptodactylidae</taxon>
        <taxon>Leiuperinae</taxon>
        <taxon>Physalaemus</taxon>
    </lineage>
</organism>
<protein>
    <recommendedName>
        <fullName evidence="2">Nattererin-2</fullName>
    </recommendedName>
</protein>
<feature type="peptide" id="PRO_0000438963" description="Nattererin-2" evidence="1">
    <location>
        <begin position="1"/>
        <end position="30"/>
    </location>
</feature>
<reference evidence="3" key="1">
    <citation type="journal article" date="2015" name="Rapid Commun. Mass Spectrom.">
        <title>Skin secretion peptides: the molecular facet of the deimatic behavior of the four-eyed frog, Physalaemus nattereri (Anura, Leptodactylidae).</title>
        <authorList>
            <person name="Barbosa E.A."/>
            <person name="Iembo T."/>
            <person name="Martins G.R."/>
            <person name="Silva L.P."/>
            <person name="Prates M.V."/>
            <person name="Andrade A.C."/>
            <person name="Bloch C. Jr."/>
        </authorList>
    </citation>
    <scope>PROTEIN SEQUENCE</scope>
    <scope>PROBABLE FUNCTION</scope>
    <scope>SUBCELLULAR LOCATION</scope>
    <scope>MASS SPECTROMETRY</scope>
    <scope>IDENTIFICATION BY MASS SPECTROMETRY</scope>
    <source>
        <tissue evidence="2">Skin secretion</tissue>
    </source>
</reference>
<proteinExistence type="evidence at protein level"/>
<keyword id="KW-0878">Amphibian defense peptide</keyword>
<keyword id="KW-0044">Antibiotic</keyword>
<keyword id="KW-0929">Antimicrobial</keyword>
<keyword id="KW-0903">Direct protein sequencing</keyword>
<keyword id="KW-0964">Secreted</keyword>
<dbReference type="SMR" id="P86914"/>
<dbReference type="GO" id="GO:0005576">
    <property type="term" value="C:extracellular region"/>
    <property type="evidence" value="ECO:0000314"/>
    <property type="project" value="UniProtKB"/>
</dbReference>
<dbReference type="GO" id="GO:0042742">
    <property type="term" value="P:defense response to bacterium"/>
    <property type="evidence" value="ECO:0007669"/>
    <property type="project" value="UniProtKB-KW"/>
</dbReference>
<comment type="function">
    <text evidence="1">Probably has antibacterial activity.</text>
</comment>
<comment type="subcellular location">
    <subcellularLocation>
        <location evidence="1">Secreted</location>
    </subcellularLocation>
</comment>
<comment type="tissue specificity">
    <text evidence="4">Expressed by the skin glands.</text>
</comment>
<comment type="mass spectrometry" mass="3207.8" method="MALDI" evidence="1"/>
<name>NTN2_PHYNA</name>
<accession>P86914</accession>
<evidence type="ECO:0000269" key="1">
    <source>
    </source>
</evidence>
<evidence type="ECO:0000303" key="2">
    <source>
    </source>
</evidence>
<evidence type="ECO:0000305" key="3"/>
<evidence type="ECO:0000305" key="4">
    <source>
    </source>
</evidence>